<dbReference type="EMBL" id="AP008934">
    <property type="protein sequence ID" value="BAE18259.1"/>
    <property type="molecule type" value="Genomic_DNA"/>
</dbReference>
<dbReference type="RefSeq" id="WP_002483091.1">
    <property type="nucleotide sequence ID" value="NZ_MTGA01000038.1"/>
</dbReference>
<dbReference type="SMR" id="Q49Y83"/>
<dbReference type="GeneID" id="66867346"/>
<dbReference type="KEGG" id="ssp:SSP1114"/>
<dbReference type="eggNOG" id="COG0211">
    <property type="taxonomic scope" value="Bacteria"/>
</dbReference>
<dbReference type="HOGENOM" id="CLU_095424_4_0_9"/>
<dbReference type="OrthoDB" id="9803474at2"/>
<dbReference type="Proteomes" id="UP000006371">
    <property type="component" value="Chromosome"/>
</dbReference>
<dbReference type="GO" id="GO:0022625">
    <property type="term" value="C:cytosolic large ribosomal subunit"/>
    <property type="evidence" value="ECO:0007669"/>
    <property type="project" value="TreeGrafter"/>
</dbReference>
<dbReference type="GO" id="GO:0003735">
    <property type="term" value="F:structural constituent of ribosome"/>
    <property type="evidence" value="ECO:0007669"/>
    <property type="project" value="InterPro"/>
</dbReference>
<dbReference type="GO" id="GO:0006412">
    <property type="term" value="P:translation"/>
    <property type="evidence" value="ECO:0007669"/>
    <property type="project" value="UniProtKB-UniRule"/>
</dbReference>
<dbReference type="FunFam" id="2.40.50.100:FF:000004">
    <property type="entry name" value="50S ribosomal protein L27"/>
    <property type="match status" value="1"/>
</dbReference>
<dbReference type="Gene3D" id="2.40.50.100">
    <property type="match status" value="1"/>
</dbReference>
<dbReference type="HAMAP" id="MF_00539">
    <property type="entry name" value="Ribosomal_bL27"/>
    <property type="match status" value="1"/>
</dbReference>
<dbReference type="InterPro" id="IPR001684">
    <property type="entry name" value="Ribosomal_bL27"/>
</dbReference>
<dbReference type="InterPro" id="IPR018261">
    <property type="entry name" value="Ribosomal_bL27_CS"/>
</dbReference>
<dbReference type="NCBIfam" id="TIGR00062">
    <property type="entry name" value="L27"/>
    <property type="match status" value="1"/>
</dbReference>
<dbReference type="PANTHER" id="PTHR15893:SF0">
    <property type="entry name" value="LARGE RIBOSOMAL SUBUNIT PROTEIN BL27M"/>
    <property type="match status" value="1"/>
</dbReference>
<dbReference type="PANTHER" id="PTHR15893">
    <property type="entry name" value="RIBOSOMAL PROTEIN L27"/>
    <property type="match status" value="1"/>
</dbReference>
<dbReference type="Pfam" id="PF01016">
    <property type="entry name" value="Ribosomal_L27"/>
    <property type="match status" value="1"/>
</dbReference>
<dbReference type="PRINTS" id="PR00063">
    <property type="entry name" value="RIBOSOMALL27"/>
</dbReference>
<dbReference type="SUPFAM" id="SSF110324">
    <property type="entry name" value="Ribosomal L27 protein-like"/>
    <property type="match status" value="1"/>
</dbReference>
<dbReference type="PROSITE" id="PS00831">
    <property type="entry name" value="RIBOSOMAL_L27"/>
    <property type="match status" value="1"/>
</dbReference>
<protein>
    <recommendedName>
        <fullName evidence="2">Large ribosomal subunit protein bL27</fullName>
    </recommendedName>
    <alternativeName>
        <fullName evidence="4">50S ribosomal protein L27</fullName>
    </alternativeName>
</protein>
<organism>
    <name type="scientific">Staphylococcus saprophyticus subsp. saprophyticus (strain ATCC 15305 / DSM 20229 / NCIMB 8711 / NCTC 7292 / S-41)</name>
    <dbReference type="NCBI Taxonomy" id="342451"/>
    <lineage>
        <taxon>Bacteria</taxon>
        <taxon>Bacillati</taxon>
        <taxon>Bacillota</taxon>
        <taxon>Bacilli</taxon>
        <taxon>Bacillales</taxon>
        <taxon>Staphylococcaceae</taxon>
        <taxon>Staphylococcus</taxon>
    </lineage>
</organism>
<keyword id="KW-1185">Reference proteome</keyword>
<keyword id="KW-0687">Ribonucleoprotein</keyword>
<keyword id="KW-0689">Ribosomal protein</keyword>
<feature type="propeptide" id="PRO_0000459944" evidence="1">
    <location>
        <begin position="1"/>
        <end position="9"/>
    </location>
</feature>
<feature type="chain" id="PRO_1000017622" description="Large ribosomal subunit protein bL27">
    <location>
        <begin position="10"/>
        <end position="94"/>
    </location>
</feature>
<feature type="region of interest" description="Disordered" evidence="3">
    <location>
        <begin position="13"/>
        <end position="32"/>
    </location>
</feature>
<feature type="compositionally biased region" description="Basic and acidic residues" evidence="3">
    <location>
        <begin position="20"/>
        <end position="32"/>
    </location>
</feature>
<proteinExistence type="inferred from homology"/>
<reference key="1">
    <citation type="journal article" date="2005" name="Proc. Natl. Acad. Sci. U.S.A.">
        <title>Whole genome sequence of Staphylococcus saprophyticus reveals the pathogenesis of uncomplicated urinary tract infection.</title>
        <authorList>
            <person name="Kuroda M."/>
            <person name="Yamashita A."/>
            <person name="Hirakawa H."/>
            <person name="Kumano M."/>
            <person name="Morikawa K."/>
            <person name="Higashide M."/>
            <person name="Maruyama A."/>
            <person name="Inose Y."/>
            <person name="Matoba K."/>
            <person name="Toh H."/>
            <person name="Kuhara S."/>
            <person name="Hattori M."/>
            <person name="Ohta T."/>
        </authorList>
    </citation>
    <scope>NUCLEOTIDE SEQUENCE [LARGE SCALE GENOMIC DNA]</scope>
    <source>
        <strain>ATCC 15305 / DSM 20229 / NCIMB 8711 / NCTC 7292 / S-41</strain>
    </source>
</reference>
<evidence type="ECO:0000250" key="1">
    <source>
        <dbReference type="UniProtKB" id="Q2FXT0"/>
    </source>
</evidence>
<evidence type="ECO:0000255" key="2">
    <source>
        <dbReference type="HAMAP-Rule" id="MF_00539"/>
    </source>
</evidence>
<evidence type="ECO:0000256" key="3">
    <source>
        <dbReference type="SAM" id="MobiDB-lite"/>
    </source>
</evidence>
<evidence type="ECO:0000305" key="4"/>
<comment type="PTM">
    <text evidence="1">The N-terminus is cleaved by ribosomal processing cysteine protease Prp.</text>
</comment>
<comment type="similarity">
    <text evidence="2">Belongs to the bacterial ribosomal protein bL27 family.</text>
</comment>
<name>RL27_STAS1</name>
<gene>
    <name evidence="2" type="primary">rpmA</name>
    <name type="ordered locus">SSP1114</name>
</gene>
<accession>Q49Y83</accession>
<sequence length="94" mass="10287">MLKLNLQFFSSKKGLGSTKNGRDSESKRLGAKRADGQYVTGGSILFRQRGTKIYPGENVGRGGDDTLFAKIDGVVKFERKGRDKKQVSVYAAAE</sequence>